<comment type="function">
    <text evidence="1">Plays a central role in chromosome condensation, segregation and cell cycle progression. Functions as a homodimer, which is essential for chromosome partition. Involved in negative DNA supercoiling in vivo, and by this means organize and compact chromosomes. May achieve or facilitate chromosome segregation by condensation DNA from both sides of a centrally located replisome during cell division.</text>
</comment>
<comment type="subunit">
    <text evidence="1">Homodimerization via its hinge domain. Binds to DNA via its C-terminal region. Interacts, and probably forms a ternary complex, with MukE and MukF via its C-terminal region. The complex formation is stimulated by calcium or magnesium. Interacts with tubulin-related protein FtsZ.</text>
</comment>
<comment type="subcellular location">
    <subcellularLocation>
        <location evidence="1">Cytoplasm</location>
        <location evidence="1">Nucleoid</location>
    </subcellularLocation>
    <text evidence="1">Restricted to the nucleoid region.</text>
</comment>
<comment type="domain">
    <text evidence="1">The hinge domain, which separates the large intramolecular coiled coil regions, allows the homodimerization, forming a V-shaped homodimer.</text>
</comment>
<comment type="similarity">
    <text evidence="1">Belongs to the SMC family. MukB subfamily.</text>
</comment>
<feature type="chain" id="PRO_1000069909" description="Chromosome partition protein MukB">
    <location>
        <begin position="1"/>
        <end position="1510"/>
    </location>
</feature>
<feature type="region of interest" description="Flexible hinge" evidence="1">
    <location>
        <begin position="707"/>
        <end position="824"/>
    </location>
</feature>
<feature type="coiled-coil region" evidence="1">
    <location>
        <begin position="6"/>
        <end position="30"/>
    </location>
</feature>
<feature type="coiled-coil region" evidence="1">
    <location>
        <begin position="346"/>
        <end position="506"/>
    </location>
</feature>
<feature type="coiled-coil region" evidence="1">
    <location>
        <begin position="553"/>
        <end position="611"/>
    </location>
</feature>
<feature type="coiled-coil region" evidence="1">
    <location>
        <begin position="673"/>
        <end position="706"/>
    </location>
</feature>
<feature type="coiled-coil region" evidence="1">
    <location>
        <begin position="821"/>
        <end position="846"/>
    </location>
</feature>
<feature type="coiled-coil region" evidence="1">
    <location>
        <begin position="876"/>
        <end position="1064"/>
    </location>
</feature>
<feature type="coiled-coil region" evidence="1">
    <location>
        <begin position="1094"/>
        <end position="1149"/>
    </location>
</feature>
<feature type="coiled-coil region" evidence="1">
    <location>
        <begin position="1249"/>
        <end position="1304"/>
    </location>
</feature>
<feature type="binding site" evidence="1">
    <location>
        <begin position="75"/>
        <end position="82"/>
    </location>
    <ligand>
        <name>ATP</name>
        <dbReference type="ChEBI" id="CHEBI:30616"/>
    </ligand>
</feature>
<name>MUKB_HAEIG</name>
<gene>
    <name evidence="1" type="primary">mukB</name>
    <name type="ordered locus">CGSHiGG_00570</name>
</gene>
<organism>
    <name type="scientific">Haemophilus influenzae (strain PittGG)</name>
    <dbReference type="NCBI Taxonomy" id="374931"/>
    <lineage>
        <taxon>Bacteria</taxon>
        <taxon>Pseudomonadati</taxon>
        <taxon>Pseudomonadota</taxon>
        <taxon>Gammaproteobacteria</taxon>
        <taxon>Pasteurellales</taxon>
        <taxon>Pasteurellaceae</taxon>
        <taxon>Haemophilus</taxon>
    </lineage>
</organism>
<reference key="1">
    <citation type="journal article" date="2007" name="Genome Biol.">
        <title>Characterization and modeling of the Haemophilus influenzae core and supragenomes based on the complete genomic sequences of Rd and 12 clinical nontypeable strains.</title>
        <authorList>
            <person name="Hogg J.S."/>
            <person name="Hu F.Z."/>
            <person name="Janto B."/>
            <person name="Boissy R."/>
            <person name="Hayes J."/>
            <person name="Keefe R."/>
            <person name="Post J.C."/>
            <person name="Ehrlich G.D."/>
        </authorList>
    </citation>
    <scope>NUCLEOTIDE SEQUENCE [LARGE SCALE GENOMIC DNA]</scope>
    <source>
        <strain>PittGG</strain>
    </source>
</reference>
<evidence type="ECO:0000255" key="1">
    <source>
        <dbReference type="HAMAP-Rule" id="MF_01800"/>
    </source>
</evidence>
<proteinExistence type="inferred from homology"/>
<accession>A5UEK8</accession>
<keyword id="KW-0067">ATP-binding</keyword>
<keyword id="KW-0131">Cell cycle</keyword>
<keyword id="KW-0132">Cell division</keyword>
<keyword id="KW-0159">Chromosome partition</keyword>
<keyword id="KW-0175">Coiled coil</keyword>
<keyword id="KW-0963">Cytoplasm</keyword>
<keyword id="KW-0226">DNA condensation</keyword>
<keyword id="KW-0238">DNA-binding</keyword>
<keyword id="KW-0547">Nucleotide-binding</keyword>
<protein>
    <recommendedName>
        <fullName evidence="1">Chromosome partition protein MukB</fullName>
    </recommendedName>
    <alternativeName>
        <fullName evidence="1">Structural maintenance of chromosome-related protein</fullName>
    </alternativeName>
</protein>
<dbReference type="EMBL" id="CP000672">
    <property type="protein sequence ID" value="ABQ99213.1"/>
    <property type="molecule type" value="Genomic_DNA"/>
</dbReference>
<dbReference type="SMR" id="A5UEK8"/>
<dbReference type="KEGG" id="hiq:CGSHiGG_00570"/>
<dbReference type="HOGENOM" id="CLU_004430_0_0_6"/>
<dbReference type="Proteomes" id="UP000001990">
    <property type="component" value="Chromosome"/>
</dbReference>
<dbReference type="GO" id="GO:0005737">
    <property type="term" value="C:cytoplasm"/>
    <property type="evidence" value="ECO:0007669"/>
    <property type="project" value="UniProtKB-UniRule"/>
</dbReference>
<dbReference type="GO" id="GO:0009295">
    <property type="term" value="C:nucleoid"/>
    <property type="evidence" value="ECO:0007669"/>
    <property type="project" value="UniProtKB-SubCell"/>
</dbReference>
<dbReference type="GO" id="GO:0005524">
    <property type="term" value="F:ATP binding"/>
    <property type="evidence" value="ECO:0007669"/>
    <property type="project" value="UniProtKB-UniRule"/>
</dbReference>
<dbReference type="GO" id="GO:0003677">
    <property type="term" value="F:DNA binding"/>
    <property type="evidence" value="ECO:0007669"/>
    <property type="project" value="UniProtKB-UniRule"/>
</dbReference>
<dbReference type="GO" id="GO:0051301">
    <property type="term" value="P:cell division"/>
    <property type="evidence" value="ECO:0007669"/>
    <property type="project" value="UniProtKB-KW"/>
</dbReference>
<dbReference type="GO" id="GO:0030261">
    <property type="term" value="P:chromosome condensation"/>
    <property type="evidence" value="ECO:0007669"/>
    <property type="project" value="UniProtKB-KW"/>
</dbReference>
<dbReference type="GO" id="GO:0007059">
    <property type="term" value="P:chromosome segregation"/>
    <property type="evidence" value="ECO:0007669"/>
    <property type="project" value="UniProtKB-UniRule"/>
</dbReference>
<dbReference type="GO" id="GO:0006260">
    <property type="term" value="P:DNA replication"/>
    <property type="evidence" value="ECO:0007669"/>
    <property type="project" value="UniProtKB-UniRule"/>
</dbReference>
<dbReference type="Gene3D" id="1.20.58.850">
    <property type="match status" value="1"/>
</dbReference>
<dbReference type="Gene3D" id="3.40.1140.10">
    <property type="match status" value="2"/>
</dbReference>
<dbReference type="Gene3D" id="1.20.5.420">
    <property type="entry name" value="Immunoglobulin FC, subunit C"/>
    <property type="match status" value="1"/>
</dbReference>
<dbReference type="Gene3D" id="3.30.70.3500">
    <property type="entry name" value="MukB, hinge domain"/>
    <property type="match status" value="1"/>
</dbReference>
<dbReference type="HAMAP" id="MF_01800">
    <property type="entry name" value="MukB"/>
    <property type="match status" value="1"/>
</dbReference>
<dbReference type="InterPro" id="IPR012090">
    <property type="entry name" value="MukB"/>
</dbReference>
<dbReference type="InterPro" id="IPR050308">
    <property type="entry name" value="MukB/SMC"/>
</dbReference>
<dbReference type="InterPro" id="IPR032520">
    <property type="entry name" value="MukB_hinge"/>
</dbReference>
<dbReference type="InterPro" id="IPR042501">
    <property type="entry name" value="MukB_hinge_sf"/>
</dbReference>
<dbReference type="InterPro" id="IPR007406">
    <property type="entry name" value="MukB_N_dom"/>
</dbReference>
<dbReference type="InterPro" id="IPR027417">
    <property type="entry name" value="P-loop_NTPase"/>
</dbReference>
<dbReference type="NCBIfam" id="NF003422">
    <property type="entry name" value="PRK04863.1"/>
    <property type="match status" value="1"/>
</dbReference>
<dbReference type="PANTHER" id="PTHR42963">
    <property type="entry name" value="CHROMOSOME PARTITION PROTEIN MUKB"/>
    <property type="match status" value="1"/>
</dbReference>
<dbReference type="PANTHER" id="PTHR42963:SF1">
    <property type="entry name" value="DUF4476 DOMAIN-CONTAINING PROTEIN"/>
    <property type="match status" value="1"/>
</dbReference>
<dbReference type="Pfam" id="PF04310">
    <property type="entry name" value="MukB"/>
    <property type="match status" value="1"/>
</dbReference>
<dbReference type="Pfam" id="PF16330">
    <property type="entry name" value="MukB_hinge"/>
    <property type="match status" value="1"/>
</dbReference>
<dbReference type="Pfam" id="PF13558">
    <property type="entry name" value="SbcC_Walker_B"/>
    <property type="match status" value="1"/>
</dbReference>
<dbReference type="PIRSF" id="PIRSF005246">
    <property type="entry name" value="MukB"/>
    <property type="match status" value="1"/>
</dbReference>
<dbReference type="SUPFAM" id="SSF52540">
    <property type="entry name" value="P-loop containing nucleoside triphosphate hydrolases"/>
    <property type="match status" value="2"/>
</dbReference>
<sequence length="1510" mass="173185">MSDVFELENEIELESDEVIMENENVEEIVDAPIPFSMTTNNGVERGKFRSLTLINWNGFFARTFDLDELVTTLSGGNGAGKSTTMAGFVTALIPDLTLLHFRNTTEAGSTGGSRDKGLHGKLRPGVCYAVLDTINSRHQRILVGVRLQQIAGRDKKVDLKTFSIQGVELSQNPTALFTETVGERQARVLNLNELKDKIENIGAQFKQYHSITDYHGMMFDLGIIPKRLRSASDRSKFYKLIEASLYGGISSAITRSLRDYLLPENLGVRKAFQDMESALRENRMTLEAIKVTQSDRDLFKHLITETTNYVASDYMRNANERRGNIEAALESRREWYKAKAEQNLSQHRLVDLSREAAELAENERTLEVDHQSAVDHLNLVLNALRHQEKITRYQEDIAELTERLEEQKMVVEDANDALEESQAQFEQTEIEIDAVRAQLADYQKALDAQQTRALQYQQAIAALEKAKTLCGLADLSVKNVEDYHAEFEAHAESLTETVLELEHKMSISEAAKSQFDKAYQLVCKIAGEMPRSAAWESAKELLREYPSQKLQAQQTPQLRTKLHELEQRYAQQQSAVKLLNDFNQRTNLSLQTAEELEDYHAEQEALIEDISAGLSEQVENRSTLRQKRENLTALYDENARKAPAWLTAQAALERLEQQSGETFEHSQDVMNFMQSQLVKERELTMQRDQLEQKRLQLDEQISRLSQPDGSEDPRLNMLAERFGGVLLSELYDDVTIEDAPYFSALYGPSRHAIVVRDLNAVREQLAQLEDCPDDLYLIEGDPTAFDDSVLSAQELELGVVVQVSDRELRYSRFPEIPLFGSAAREKRLEELQIERDEVAEQHAQIAFDVQKYQRLHEHFSQFVGLHLALAFQPNPEALMSEINRERNEIDRELNQFNNGEQQLRIQLDNAKEKLQLLNKLIPQLNVLADEDLIDRIEECREQLDIAEQDEYFIRQYGVTLSQLEPIANSLQSDPENYEGLKNELTQAIERQKQVQQRVFALADVVQRKPHFGYEDAGQAETSELNEKLRQRLEQMQAQRDTQREQVRQKQSQFAEYNRVLIQLQSSYDSKYQLLNELIGEISDLGVRADDGAEERARIRRDELHQQLSTSRQRRSYVEKQLTLIESEADNLNRLIRKTERDYKTQRELVVAAKVSWCVVLRLSRNSDMEKRLNRRELAYLSADELRSMSDKALGALRTAVADNEYLRDSLRVSEDSRKPENKVRFFIAVYQHLRERIRQDIIKTDDPIDAIEQMEIELSRLTAELTGREKKLAISSESVANIMRKTIQREQNRIRMLNQGLQNIAFGQVKSVRLVVNIRDTHAMLLDALSGQQNEYQDLFNDNRITFSEAMAKLYQRINPHIDMGQRTAQTIGEELLDYRNYLELEVEVFRGADGWLRAESGALSTGEAIGTGMSILLMVVQSWEEESRRIRGKDIVPCRLLFLDEAARLDGKSISTLFELCERLDMQLLIAAPENISPEKGTTYKLVRKIAGNQEHVHVVGLRGFGATE</sequence>